<sequence>MKLFPLFADLQGRRVLVVGGGEIAARKVQLLLEASADVRVGAPALTPELALLAAQGRIHALQGEFRPDWLDDAWLVVAATDDRAVNAAVSQAAQARRIFSNVVDDAELSSFQVPSIVDRSPLVVAISSSGVAPVLARRLREKVESLFDHSLGALAALAARHRPRIRERRPDLKQRRKFYDWLLDGPVAALLRQQRPEEAERLLETALQAPQDDGAGSVVLVGAGPGDPGLLTLKALRALNEADVILYDRLVSPAVLALARRDADRVAVGKRPGEDHDATQARIHALLVEHARAGRRVVRLKGGDAFIFGRGGEELEYLRAHGVRYEVVPGITAALACAAYAGIPLTHRDHAQSVRLVTAHCREDEDTLDWAGLAREHQTLAFYMGVGQLETLSARLIAHGRSGATPFALIENGSRPEQRVVSGRLADLAAVARSHGVRAPALLIVGEVAGLARELHWFGAHLEGQRPAPAALAA</sequence>
<organism>
    <name type="scientific">Bordetella petrii (strain ATCC BAA-461 / DSM 12804 / CCUG 43448)</name>
    <dbReference type="NCBI Taxonomy" id="340100"/>
    <lineage>
        <taxon>Bacteria</taxon>
        <taxon>Pseudomonadati</taxon>
        <taxon>Pseudomonadota</taxon>
        <taxon>Betaproteobacteria</taxon>
        <taxon>Burkholderiales</taxon>
        <taxon>Alcaligenaceae</taxon>
        <taxon>Bordetella</taxon>
    </lineage>
</organism>
<reference key="1">
    <citation type="journal article" date="2008" name="BMC Genomics">
        <title>The missing link: Bordetella petrii is endowed with both the metabolic versatility of environmental bacteria and virulence traits of pathogenic Bordetellae.</title>
        <authorList>
            <person name="Gross R."/>
            <person name="Guzman C.A."/>
            <person name="Sebaihia M."/>
            <person name="Martin dos Santos V.A.P."/>
            <person name="Pieper D.H."/>
            <person name="Koebnik R."/>
            <person name="Lechner M."/>
            <person name="Bartels D."/>
            <person name="Buhrmester J."/>
            <person name="Choudhuri J.V."/>
            <person name="Ebensen T."/>
            <person name="Gaigalat L."/>
            <person name="Herrmann S."/>
            <person name="Khachane A.N."/>
            <person name="Larisch C."/>
            <person name="Link S."/>
            <person name="Linke B."/>
            <person name="Meyer F."/>
            <person name="Mormann S."/>
            <person name="Nakunst D."/>
            <person name="Rueckert C."/>
            <person name="Schneiker-Bekel S."/>
            <person name="Schulze K."/>
            <person name="Voerholter F.-J."/>
            <person name="Yevsa T."/>
            <person name="Engle J.T."/>
            <person name="Goldman W.E."/>
            <person name="Puehler A."/>
            <person name="Goebel U.B."/>
            <person name="Goesmann A."/>
            <person name="Bloecker H."/>
            <person name="Kaiser O."/>
            <person name="Martinez-Arias R."/>
        </authorList>
    </citation>
    <scope>NUCLEOTIDE SEQUENCE [LARGE SCALE GENOMIC DNA]</scope>
    <source>
        <strain>ATCC BAA-461 / DSM 12804 / CCUG 43448</strain>
    </source>
</reference>
<comment type="function">
    <text evidence="1">Multifunctional enzyme that catalyzes the SAM-dependent methylations of uroporphyrinogen III at position C-2 and C-7 to form precorrin-2 via precorrin-1. Then it catalyzes the NAD-dependent ring dehydrogenation of precorrin-2 to yield sirohydrochlorin. Finally, it catalyzes the ferrochelation of sirohydrochlorin to yield siroheme.</text>
</comment>
<comment type="catalytic activity">
    <reaction evidence="1">
        <text>uroporphyrinogen III + 2 S-adenosyl-L-methionine = precorrin-2 + 2 S-adenosyl-L-homocysteine + H(+)</text>
        <dbReference type="Rhea" id="RHEA:32459"/>
        <dbReference type="ChEBI" id="CHEBI:15378"/>
        <dbReference type="ChEBI" id="CHEBI:57308"/>
        <dbReference type="ChEBI" id="CHEBI:57856"/>
        <dbReference type="ChEBI" id="CHEBI:58827"/>
        <dbReference type="ChEBI" id="CHEBI:59789"/>
        <dbReference type="EC" id="2.1.1.107"/>
    </reaction>
</comment>
<comment type="catalytic activity">
    <reaction evidence="1">
        <text>precorrin-2 + NAD(+) = sirohydrochlorin + NADH + 2 H(+)</text>
        <dbReference type="Rhea" id="RHEA:15613"/>
        <dbReference type="ChEBI" id="CHEBI:15378"/>
        <dbReference type="ChEBI" id="CHEBI:57540"/>
        <dbReference type="ChEBI" id="CHEBI:57945"/>
        <dbReference type="ChEBI" id="CHEBI:58351"/>
        <dbReference type="ChEBI" id="CHEBI:58827"/>
        <dbReference type="EC" id="1.3.1.76"/>
    </reaction>
</comment>
<comment type="catalytic activity">
    <reaction evidence="1">
        <text>siroheme + 2 H(+) = sirohydrochlorin + Fe(2+)</text>
        <dbReference type="Rhea" id="RHEA:24360"/>
        <dbReference type="ChEBI" id="CHEBI:15378"/>
        <dbReference type="ChEBI" id="CHEBI:29033"/>
        <dbReference type="ChEBI" id="CHEBI:58351"/>
        <dbReference type="ChEBI" id="CHEBI:60052"/>
        <dbReference type="EC" id="4.99.1.4"/>
    </reaction>
</comment>
<comment type="pathway">
    <text evidence="1">Cofactor biosynthesis; adenosylcobalamin biosynthesis; precorrin-2 from uroporphyrinogen III: step 1/1.</text>
</comment>
<comment type="pathway">
    <text evidence="1">Cofactor biosynthesis; adenosylcobalamin biosynthesis; sirohydrochlorin from precorrin-2: step 1/1.</text>
</comment>
<comment type="pathway">
    <text evidence="1">Porphyrin-containing compound metabolism; siroheme biosynthesis; precorrin-2 from uroporphyrinogen III: step 1/1.</text>
</comment>
<comment type="pathway">
    <text evidence="1">Porphyrin-containing compound metabolism; siroheme biosynthesis; siroheme from sirohydrochlorin: step 1/1.</text>
</comment>
<comment type="pathway">
    <text evidence="1">Porphyrin-containing compound metabolism; siroheme biosynthesis; sirohydrochlorin from precorrin-2: step 1/1.</text>
</comment>
<comment type="similarity">
    <text evidence="1">In the N-terminal section; belongs to the precorrin-2 dehydrogenase / sirohydrochlorin ferrochelatase family.</text>
</comment>
<comment type="similarity">
    <text evidence="1">In the C-terminal section; belongs to the precorrin methyltransferase family.</text>
</comment>
<gene>
    <name evidence="1" type="primary">cysG</name>
    <name type="ordered locus">Bpet3643</name>
</gene>
<protein>
    <recommendedName>
        <fullName evidence="1">Siroheme synthase</fullName>
    </recommendedName>
    <domain>
        <recommendedName>
            <fullName evidence="1">Uroporphyrinogen-III C-methyltransferase</fullName>
            <shortName evidence="1">Urogen III methylase</shortName>
            <ecNumber evidence="1">2.1.1.107</ecNumber>
        </recommendedName>
        <alternativeName>
            <fullName evidence="1">SUMT</fullName>
        </alternativeName>
        <alternativeName>
            <fullName evidence="1">Uroporphyrinogen III methylase</fullName>
            <shortName evidence="1">UROM</shortName>
        </alternativeName>
    </domain>
    <domain>
        <recommendedName>
            <fullName evidence="1">Precorrin-2 dehydrogenase</fullName>
            <ecNumber evidence="1">1.3.1.76</ecNumber>
        </recommendedName>
    </domain>
    <domain>
        <recommendedName>
            <fullName evidence="1">Sirohydrochlorin ferrochelatase</fullName>
            <ecNumber evidence="1">4.99.1.4</ecNumber>
        </recommendedName>
    </domain>
</protein>
<evidence type="ECO:0000255" key="1">
    <source>
        <dbReference type="HAMAP-Rule" id="MF_01646"/>
    </source>
</evidence>
<accession>A9HZV6</accession>
<dbReference type="EC" id="2.1.1.107" evidence="1"/>
<dbReference type="EC" id="1.3.1.76" evidence="1"/>
<dbReference type="EC" id="4.99.1.4" evidence="1"/>
<dbReference type="EMBL" id="AM902716">
    <property type="protein sequence ID" value="CAP43986.1"/>
    <property type="molecule type" value="Genomic_DNA"/>
</dbReference>
<dbReference type="SMR" id="A9HZV6"/>
<dbReference type="STRING" id="94624.Bpet3643"/>
<dbReference type="KEGG" id="bpt:Bpet3643"/>
<dbReference type="eggNOG" id="COG0007">
    <property type="taxonomic scope" value="Bacteria"/>
</dbReference>
<dbReference type="eggNOG" id="COG1648">
    <property type="taxonomic scope" value="Bacteria"/>
</dbReference>
<dbReference type="UniPathway" id="UPA00148">
    <property type="reaction ID" value="UER00211"/>
</dbReference>
<dbReference type="UniPathway" id="UPA00148">
    <property type="reaction ID" value="UER00222"/>
</dbReference>
<dbReference type="UniPathway" id="UPA00262">
    <property type="reaction ID" value="UER00211"/>
</dbReference>
<dbReference type="UniPathway" id="UPA00262">
    <property type="reaction ID" value="UER00222"/>
</dbReference>
<dbReference type="UniPathway" id="UPA00262">
    <property type="reaction ID" value="UER00376"/>
</dbReference>
<dbReference type="Proteomes" id="UP000001225">
    <property type="component" value="Chromosome"/>
</dbReference>
<dbReference type="GO" id="GO:0051287">
    <property type="term" value="F:NAD binding"/>
    <property type="evidence" value="ECO:0007669"/>
    <property type="project" value="InterPro"/>
</dbReference>
<dbReference type="GO" id="GO:0043115">
    <property type="term" value="F:precorrin-2 dehydrogenase activity"/>
    <property type="evidence" value="ECO:0007669"/>
    <property type="project" value="UniProtKB-UniRule"/>
</dbReference>
<dbReference type="GO" id="GO:0051266">
    <property type="term" value="F:sirohydrochlorin ferrochelatase activity"/>
    <property type="evidence" value="ECO:0007669"/>
    <property type="project" value="UniProtKB-EC"/>
</dbReference>
<dbReference type="GO" id="GO:0004851">
    <property type="term" value="F:uroporphyrin-III C-methyltransferase activity"/>
    <property type="evidence" value="ECO:0007669"/>
    <property type="project" value="UniProtKB-UniRule"/>
</dbReference>
<dbReference type="GO" id="GO:0009236">
    <property type="term" value="P:cobalamin biosynthetic process"/>
    <property type="evidence" value="ECO:0007669"/>
    <property type="project" value="UniProtKB-UniRule"/>
</dbReference>
<dbReference type="GO" id="GO:0032259">
    <property type="term" value="P:methylation"/>
    <property type="evidence" value="ECO:0007669"/>
    <property type="project" value="UniProtKB-KW"/>
</dbReference>
<dbReference type="GO" id="GO:0019354">
    <property type="term" value="P:siroheme biosynthetic process"/>
    <property type="evidence" value="ECO:0007669"/>
    <property type="project" value="UniProtKB-UniRule"/>
</dbReference>
<dbReference type="CDD" id="cd11642">
    <property type="entry name" value="SUMT"/>
    <property type="match status" value="1"/>
</dbReference>
<dbReference type="FunFam" id="3.30.950.10:FF:000001">
    <property type="entry name" value="Siroheme synthase"/>
    <property type="match status" value="1"/>
</dbReference>
<dbReference type="FunFam" id="3.40.1010.10:FF:000001">
    <property type="entry name" value="Siroheme synthase"/>
    <property type="match status" value="1"/>
</dbReference>
<dbReference type="Gene3D" id="3.40.1010.10">
    <property type="entry name" value="Cobalt-precorrin-4 Transmethylase, Domain 1"/>
    <property type="match status" value="1"/>
</dbReference>
<dbReference type="Gene3D" id="3.30.950.10">
    <property type="entry name" value="Methyltransferase, Cobalt-precorrin-4 Transmethylase, Domain 2"/>
    <property type="match status" value="1"/>
</dbReference>
<dbReference type="Gene3D" id="3.40.50.720">
    <property type="entry name" value="NAD(P)-binding Rossmann-like Domain"/>
    <property type="match status" value="1"/>
</dbReference>
<dbReference type="Gene3D" id="1.10.8.210">
    <property type="entry name" value="Sirohaem synthase, dimerisation domain"/>
    <property type="match status" value="1"/>
</dbReference>
<dbReference type="Gene3D" id="3.30.160.110">
    <property type="entry name" value="Siroheme synthase, domain 2"/>
    <property type="match status" value="1"/>
</dbReference>
<dbReference type="HAMAP" id="MF_01646">
    <property type="entry name" value="Siroheme_synth"/>
    <property type="match status" value="1"/>
</dbReference>
<dbReference type="InterPro" id="IPR000878">
    <property type="entry name" value="4pyrrol_Mease"/>
</dbReference>
<dbReference type="InterPro" id="IPR035996">
    <property type="entry name" value="4pyrrol_Methylase_sf"/>
</dbReference>
<dbReference type="InterPro" id="IPR014777">
    <property type="entry name" value="4pyrrole_Mease_sub1"/>
</dbReference>
<dbReference type="InterPro" id="IPR014776">
    <property type="entry name" value="4pyrrole_Mease_sub2"/>
</dbReference>
<dbReference type="InterPro" id="IPR006366">
    <property type="entry name" value="CobA/CysG_C"/>
</dbReference>
<dbReference type="InterPro" id="IPR036291">
    <property type="entry name" value="NAD(P)-bd_dom_sf"/>
</dbReference>
<dbReference type="InterPro" id="IPR050161">
    <property type="entry name" value="Siro_Cobalamin_biosynth"/>
</dbReference>
<dbReference type="InterPro" id="IPR037115">
    <property type="entry name" value="Sirohaem_synt_dimer_dom_sf"/>
</dbReference>
<dbReference type="InterPro" id="IPR012409">
    <property type="entry name" value="Sirohaem_synth"/>
</dbReference>
<dbReference type="InterPro" id="IPR028281">
    <property type="entry name" value="Sirohaem_synthase_central"/>
</dbReference>
<dbReference type="InterPro" id="IPR019478">
    <property type="entry name" value="Sirohaem_synthase_dimer_dom"/>
</dbReference>
<dbReference type="InterPro" id="IPR006367">
    <property type="entry name" value="Sirohaem_synthase_N"/>
</dbReference>
<dbReference type="InterPro" id="IPR003043">
    <property type="entry name" value="Uropor_MeTrfase_CS"/>
</dbReference>
<dbReference type="NCBIfam" id="TIGR01469">
    <property type="entry name" value="cobA_cysG_Cterm"/>
    <property type="match status" value="1"/>
</dbReference>
<dbReference type="NCBIfam" id="TIGR01470">
    <property type="entry name" value="cysG_Nterm"/>
    <property type="match status" value="1"/>
</dbReference>
<dbReference type="NCBIfam" id="NF004790">
    <property type="entry name" value="PRK06136.1"/>
    <property type="match status" value="1"/>
</dbReference>
<dbReference type="NCBIfam" id="NF007922">
    <property type="entry name" value="PRK10637.1"/>
    <property type="match status" value="1"/>
</dbReference>
<dbReference type="PANTHER" id="PTHR45790:SF1">
    <property type="entry name" value="SIROHEME SYNTHASE"/>
    <property type="match status" value="1"/>
</dbReference>
<dbReference type="PANTHER" id="PTHR45790">
    <property type="entry name" value="SIROHEME SYNTHASE-RELATED"/>
    <property type="match status" value="1"/>
</dbReference>
<dbReference type="Pfam" id="PF10414">
    <property type="entry name" value="CysG_dimeriser"/>
    <property type="match status" value="1"/>
</dbReference>
<dbReference type="Pfam" id="PF13241">
    <property type="entry name" value="NAD_binding_7"/>
    <property type="match status" value="1"/>
</dbReference>
<dbReference type="Pfam" id="PF14824">
    <property type="entry name" value="Sirohm_synth_M"/>
    <property type="match status" value="1"/>
</dbReference>
<dbReference type="Pfam" id="PF00590">
    <property type="entry name" value="TP_methylase"/>
    <property type="match status" value="1"/>
</dbReference>
<dbReference type="PIRSF" id="PIRSF036426">
    <property type="entry name" value="Sirohaem_synth"/>
    <property type="match status" value="1"/>
</dbReference>
<dbReference type="SUPFAM" id="SSF51735">
    <property type="entry name" value="NAD(P)-binding Rossmann-fold domains"/>
    <property type="match status" value="1"/>
</dbReference>
<dbReference type="SUPFAM" id="SSF75615">
    <property type="entry name" value="Siroheme synthase middle domains-like"/>
    <property type="match status" value="1"/>
</dbReference>
<dbReference type="SUPFAM" id="SSF53790">
    <property type="entry name" value="Tetrapyrrole methylase"/>
    <property type="match status" value="1"/>
</dbReference>
<dbReference type="PROSITE" id="PS00839">
    <property type="entry name" value="SUMT_1"/>
    <property type="match status" value="1"/>
</dbReference>
<dbReference type="PROSITE" id="PS00840">
    <property type="entry name" value="SUMT_2"/>
    <property type="match status" value="1"/>
</dbReference>
<proteinExistence type="inferred from homology"/>
<feature type="chain" id="PRO_1000186935" description="Siroheme synthase">
    <location>
        <begin position="1"/>
        <end position="474"/>
    </location>
</feature>
<feature type="region of interest" description="Precorrin-2 dehydrogenase /sirohydrochlorin ferrochelatase" evidence="1">
    <location>
        <begin position="1"/>
        <end position="203"/>
    </location>
</feature>
<feature type="region of interest" description="Uroporphyrinogen-III C-methyltransferase" evidence="1">
    <location>
        <begin position="216"/>
        <end position="474"/>
    </location>
</feature>
<feature type="active site" description="Proton acceptor" evidence="1">
    <location>
        <position position="248"/>
    </location>
</feature>
<feature type="active site" description="Proton donor" evidence="1">
    <location>
        <position position="270"/>
    </location>
</feature>
<feature type="binding site" evidence="1">
    <location>
        <begin position="22"/>
        <end position="23"/>
    </location>
    <ligand>
        <name>NAD(+)</name>
        <dbReference type="ChEBI" id="CHEBI:57540"/>
    </ligand>
</feature>
<feature type="binding site" evidence="1">
    <location>
        <begin position="43"/>
        <end position="44"/>
    </location>
    <ligand>
        <name>NAD(+)</name>
        <dbReference type="ChEBI" id="CHEBI:57540"/>
    </ligand>
</feature>
<feature type="binding site" evidence="1">
    <location>
        <position position="225"/>
    </location>
    <ligand>
        <name>S-adenosyl-L-methionine</name>
        <dbReference type="ChEBI" id="CHEBI:59789"/>
    </ligand>
</feature>
<feature type="binding site" evidence="1">
    <location>
        <begin position="302"/>
        <end position="304"/>
    </location>
    <ligand>
        <name>S-adenosyl-L-methionine</name>
        <dbReference type="ChEBI" id="CHEBI:59789"/>
    </ligand>
</feature>
<feature type="binding site" evidence="1">
    <location>
        <position position="307"/>
    </location>
    <ligand>
        <name>S-adenosyl-L-methionine</name>
        <dbReference type="ChEBI" id="CHEBI:59789"/>
    </ligand>
</feature>
<feature type="binding site" evidence="1">
    <location>
        <begin position="332"/>
        <end position="333"/>
    </location>
    <ligand>
        <name>S-adenosyl-L-methionine</name>
        <dbReference type="ChEBI" id="CHEBI:59789"/>
    </ligand>
</feature>
<feature type="binding site" evidence="1">
    <location>
        <position position="384"/>
    </location>
    <ligand>
        <name>S-adenosyl-L-methionine</name>
        <dbReference type="ChEBI" id="CHEBI:59789"/>
    </ligand>
</feature>
<feature type="binding site" evidence="1">
    <location>
        <position position="413"/>
    </location>
    <ligand>
        <name>S-adenosyl-L-methionine</name>
        <dbReference type="ChEBI" id="CHEBI:59789"/>
    </ligand>
</feature>
<feature type="modified residue" description="Phosphoserine" evidence="1">
    <location>
        <position position="128"/>
    </location>
</feature>
<name>CYSG_BORPD</name>
<keyword id="KW-0169">Cobalamin biosynthesis</keyword>
<keyword id="KW-0456">Lyase</keyword>
<keyword id="KW-0489">Methyltransferase</keyword>
<keyword id="KW-0511">Multifunctional enzyme</keyword>
<keyword id="KW-0520">NAD</keyword>
<keyword id="KW-0560">Oxidoreductase</keyword>
<keyword id="KW-0597">Phosphoprotein</keyword>
<keyword id="KW-0627">Porphyrin biosynthesis</keyword>
<keyword id="KW-0949">S-adenosyl-L-methionine</keyword>
<keyword id="KW-0808">Transferase</keyword>